<protein>
    <recommendedName>
        <fullName evidence="1">SsrA-binding protein</fullName>
    </recommendedName>
    <alternativeName>
        <fullName evidence="1">Small protein B</fullName>
    </alternativeName>
</protein>
<sequence>MKVIATNKKAFHDFEILERYEAGLVLQGSEVKAIRAGRVNLKDSFVKFVKGEPFVFGMHISYLDSANPHFRPDEKRPRKLLLHKKEIDKLIGKTSEKGYTIVPLKLYFNKKNIAKLEIGLAKGKTLHDKRESLKKKIMDREARAAMKEYR</sequence>
<dbReference type="EMBL" id="AP009178">
    <property type="protein sequence ID" value="BAF70583.1"/>
    <property type="molecule type" value="Genomic_DNA"/>
</dbReference>
<dbReference type="RefSeq" id="WP_012082846.1">
    <property type="nucleotide sequence ID" value="NC_009662.1"/>
</dbReference>
<dbReference type="SMR" id="A6Q524"/>
<dbReference type="FunCoup" id="A6Q524">
    <property type="interactions" value="391"/>
</dbReference>
<dbReference type="STRING" id="387092.NIS_1476"/>
<dbReference type="KEGG" id="nis:NIS_1476"/>
<dbReference type="eggNOG" id="COG0691">
    <property type="taxonomic scope" value="Bacteria"/>
</dbReference>
<dbReference type="HOGENOM" id="CLU_108953_3_1_7"/>
<dbReference type="InParanoid" id="A6Q524"/>
<dbReference type="OrthoDB" id="9805462at2"/>
<dbReference type="Proteomes" id="UP000001118">
    <property type="component" value="Chromosome"/>
</dbReference>
<dbReference type="GO" id="GO:0005829">
    <property type="term" value="C:cytosol"/>
    <property type="evidence" value="ECO:0007669"/>
    <property type="project" value="TreeGrafter"/>
</dbReference>
<dbReference type="GO" id="GO:0003723">
    <property type="term" value="F:RNA binding"/>
    <property type="evidence" value="ECO:0007669"/>
    <property type="project" value="UniProtKB-UniRule"/>
</dbReference>
<dbReference type="GO" id="GO:0070929">
    <property type="term" value="P:trans-translation"/>
    <property type="evidence" value="ECO:0007669"/>
    <property type="project" value="UniProtKB-UniRule"/>
</dbReference>
<dbReference type="CDD" id="cd09294">
    <property type="entry name" value="SmpB"/>
    <property type="match status" value="1"/>
</dbReference>
<dbReference type="Gene3D" id="2.40.280.10">
    <property type="match status" value="1"/>
</dbReference>
<dbReference type="HAMAP" id="MF_00023">
    <property type="entry name" value="SmpB"/>
    <property type="match status" value="1"/>
</dbReference>
<dbReference type="InterPro" id="IPR023620">
    <property type="entry name" value="SmpB"/>
</dbReference>
<dbReference type="InterPro" id="IPR000037">
    <property type="entry name" value="SsrA-bd_prot"/>
</dbReference>
<dbReference type="InterPro" id="IPR020081">
    <property type="entry name" value="SsrA-bd_prot_CS"/>
</dbReference>
<dbReference type="NCBIfam" id="NF003843">
    <property type="entry name" value="PRK05422.1"/>
    <property type="match status" value="1"/>
</dbReference>
<dbReference type="NCBIfam" id="TIGR00086">
    <property type="entry name" value="smpB"/>
    <property type="match status" value="1"/>
</dbReference>
<dbReference type="PANTHER" id="PTHR30308:SF2">
    <property type="entry name" value="SSRA-BINDING PROTEIN"/>
    <property type="match status" value="1"/>
</dbReference>
<dbReference type="PANTHER" id="PTHR30308">
    <property type="entry name" value="TMRNA-BINDING COMPONENT OF TRANS-TRANSLATION TAGGING COMPLEX"/>
    <property type="match status" value="1"/>
</dbReference>
<dbReference type="Pfam" id="PF01668">
    <property type="entry name" value="SmpB"/>
    <property type="match status" value="1"/>
</dbReference>
<dbReference type="SUPFAM" id="SSF74982">
    <property type="entry name" value="Small protein B (SmpB)"/>
    <property type="match status" value="1"/>
</dbReference>
<dbReference type="PROSITE" id="PS01317">
    <property type="entry name" value="SSRP"/>
    <property type="match status" value="1"/>
</dbReference>
<feature type="chain" id="PRO_1000002093" description="SsrA-binding protein">
    <location>
        <begin position="1"/>
        <end position="150"/>
    </location>
</feature>
<organism>
    <name type="scientific">Nitratiruptor sp. (strain SB155-2)</name>
    <dbReference type="NCBI Taxonomy" id="387092"/>
    <lineage>
        <taxon>Bacteria</taxon>
        <taxon>Pseudomonadati</taxon>
        <taxon>Campylobacterota</taxon>
        <taxon>Epsilonproteobacteria</taxon>
        <taxon>Nautiliales</taxon>
        <taxon>Nitratiruptoraceae</taxon>
        <taxon>Nitratiruptor</taxon>
    </lineage>
</organism>
<name>SSRP_NITSB</name>
<reference key="1">
    <citation type="journal article" date="2007" name="Proc. Natl. Acad. Sci. U.S.A.">
        <title>Deep-sea vent epsilon-proteobacterial genomes provide insights into emergence of pathogens.</title>
        <authorList>
            <person name="Nakagawa S."/>
            <person name="Takaki Y."/>
            <person name="Shimamura S."/>
            <person name="Reysenbach A.-L."/>
            <person name="Takai K."/>
            <person name="Horikoshi K."/>
        </authorList>
    </citation>
    <scope>NUCLEOTIDE SEQUENCE [LARGE SCALE GENOMIC DNA]</scope>
    <source>
        <strain>SB155-2</strain>
    </source>
</reference>
<evidence type="ECO:0000255" key="1">
    <source>
        <dbReference type="HAMAP-Rule" id="MF_00023"/>
    </source>
</evidence>
<proteinExistence type="inferred from homology"/>
<gene>
    <name evidence="1" type="primary">smpB</name>
    <name type="ordered locus">NIS_1476</name>
</gene>
<keyword id="KW-0963">Cytoplasm</keyword>
<keyword id="KW-1185">Reference proteome</keyword>
<keyword id="KW-0694">RNA-binding</keyword>
<accession>A6Q524</accession>
<comment type="function">
    <text evidence="1">Required for rescue of stalled ribosomes mediated by trans-translation. Binds to transfer-messenger RNA (tmRNA), required for stable association of tmRNA with ribosomes. tmRNA and SmpB together mimic tRNA shape, replacing the anticodon stem-loop with SmpB. tmRNA is encoded by the ssrA gene; the 2 termini fold to resemble tRNA(Ala) and it encodes a 'tag peptide', a short internal open reading frame. During trans-translation Ala-aminoacylated tmRNA acts like a tRNA, entering the A-site of stalled ribosomes, displacing the stalled mRNA. The ribosome then switches to translate the ORF on the tmRNA; the nascent peptide is terminated with the 'tag peptide' encoded by the tmRNA and targeted for degradation. The ribosome is freed to recommence translation, which seems to be the essential function of trans-translation.</text>
</comment>
<comment type="subcellular location">
    <subcellularLocation>
        <location evidence="1">Cytoplasm</location>
    </subcellularLocation>
    <text evidence="1">The tmRNA-SmpB complex associates with stalled 70S ribosomes.</text>
</comment>
<comment type="similarity">
    <text evidence="1">Belongs to the SmpB family.</text>
</comment>